<feature type="chain" id="PRO_0000241245" description="Aspartyl/glutamyl-tRNA(Asn/Gln) amidotransferase subunit B">
    <location>
        <begin position="1"/>
        <end position="494"/>
    </location>
</feature>
<organism>
    <name type="scientific">Nitrobacter winogradskyi (strain ATCC 25391 / DSM 10237 / CIP 104748 / NCIMB 11846 / Nb-255)</name>
    <dbReference type="NCBI Taxonomy" id="323098"/>
    <lineage>
        <taxon>Bacteria</taxon>
        <taxon>Pseudomonadati</taxon>
        <taxon>Pseudomonadota</taxon>
        <taxon>Alphaproteobacteria</taxon>
        <taxon>Hyphomicrobiales</taxon>
        <taxon>Nitrobacteraceae</taxon>
        <taxon>Nitrobacter</taxon>
    </lineage>
</organism>
<name>GATB_NITWN</name>
<gene>
    <name evidence="1" type="primary">gatB</name>
    <name type="ordered locus">Nwi_1997</name>
</gene>
<accession>Q3SR35</accession>
<dbReference type="EC" id="6.3.5.-" evidence="1"/>
<dbReference type="EMBL" id="CP000115">
    <property type="protein sequence ID" value="ABA05256.1"/>
    <property type="molecule type" value="Genomic_DNA"/>
</dbReference>
<dbReference type="RefSeq" id="WP_011315243.1">
    <property type="nucleotide sequence ID" value="NC_007406.1"/>
</dbReference>
<dbReference type="SMR" id="Q3SR35"/>
<dbReference type="STRING" id="323098.Nwi_1997"/>
<dbReference type="KEGG" id="nwi:Nwi_1997"/>
<dbReference type="eggNOG" id="COG0064">
    <property type="taxonomic scope" value="Bacteria"/>
</dbReference>
<dbReference type="HOGENOM" id="CLU_019240_0_0_5"/>
<dbReference type="OrthoDB" id="9804078at2"/>
<dbReference type="Proteomes" id="UP000002531">
    <property type="component" value="Chromosome"/>
</dbReference>
<dbReference type="GO" id="GO:0050566">
    <property type="term" value="F:asparaginyl-tRNA synthase (glutamine-hydrolyzing) activity"/>
    <property type="evidence" value="ECO:0007669"/>
    <property type="project" value="RHEA"/>
</dbReference>
<dbReference type="GO" id="GO:0005524">
    <property type="term" value="F:ATP binding"/>
    <property type="evidence" value="ECO:0007669"/>
    <property type="project" value="UniProtKB-KW"/>
</dbReference>
<dbReference type="GO" id="GO:0050567">
    <property type="term" value="F:glutaminyl-tRNA synthase (glutamine-hydrolyzing) activity"/>
    <property type="evidence" value="ECO:0007669"/>
    <property type="project" value="UniProtKB-UniRule"/>
</dbReference>
<dbReference type="GO" id="GO:0070681">
    <property type="term" value="P:glutaminyl-tRNAGln biosynthesis via transamidation"/>
    <property type="evidence" value="ECO:0007669"/>
    <property type="project" value="TreeGrafter"/>
</dbReference>
<dbReference type="GO" id="GO:0006412">
    <property type="term" value="P:translation"/>
    <property type="evidence" value="ECO:0007669"/>
    <property type="project" value="UniProtKB-UniRule"/>
</dbReference>
<dbReference type="FunFam" id="1.10.10.410:FF:000001">
    <property type="entry name" value="Aspartyl/glutamyl-tRNA(Asn/Gln) amidotransferase subunit B"/>
    <property type="match status" value="1"/>
</dbReference>
<dbReference type="FunFam" id="1.10.150.380:FF:000001">
    <property type="entry name" value="Aspartyl/glutamyl-tRNA(Asn/Gln) amidotransferase subunit B"/>
    <property type="match status" value="1"/>
</dbReference>
<dbReference type="Gene3D" id="1.10.10.410">
    <property type="match status" value="1"/>
</dbReference>
<dbReference type="Gene3D" id="1.10.150.380">
    <property type="entry name" value="GatB domain, N-terminal subdomain"/>
    <property type="match status" value="1"/>
</dbReference>
<dbReference type="HAMAP" id="MF_00121">
    <property type="entry name" value="GatB"/>
    <property type="match status" value="1"/>
</dbReference>
<dbReference type="InterPro" id="IPR017959">
    <property type="entry name" value="Asn/Gln-tRNA_amidoTrfase_suB/E"/>
</dbReference>
<dbReference type="InterPro" id="IPR006075">
    <property type="entry name" value="Asn/Gln-tRNA_Trfase_suB/E_cat"/>
</dbReference>
<dbReference type="InterPro" id="IPR018027">
    <property type="entry name" value="Asn/Gln_amidotransferase"/>
</dbReference>
<dbReference type="InterPro" id="IPR003789">
    <property type="entry name" value="Asn/Gln_tRNA_amidoTrase-B-like"/>
</dbReference>
<dbReference type="InterPro" id="IPR004413">
    <property type="entry name" value="GatB"/>
</dbReference>
<dbReference type="InterPro" id="IPR042114">
    <property type="entry name" value="GatB_C_1"/>
</dbReference>
<dbReference type="InterPro" id="IPR023168">
    <property type="entry name" value="GatB_Yqey_C_2"/>
</dbReference>
<dbReference type="InterPro" id="IPR017958">
    <property type="entry name" value="Gln-tRNA_amidoTrfase_suB_CS"/>
</dbReference>
<dbReference type="InterPro" id="IPR014746">
    <property type="entry name" value="Gln_synth/guanido_kin_cat_dom"/>
</dbReference>
<dbReference type="NCBIfam" id="TIGR00133">
    <property type="entry name" value="gatB"/>
    <property type="match status" value="1"/>
</dbReference>
<dbReference type="NCBIfam" id="NF004012">
    <property type="entry name" value="PRK05477.1-2"/>
    <property type="match status" value="1"/>
</dbReference>
<dbReference type="NCBIfam" id="NF004014">
    <property type="entry name" value="PRK05477.1-4"/>
    <property type="match status" value="1"/>
</dbReference>
<dbReference type="NCBIfam" id="NF004015">
    <property type="entry name" value="PRK05477.1-5"/>
    <property type="match status" value="1"/>
</dbReference>
<dbReference type="PANTHER" id="PTHR11659">
    <property type="entry name" value="GLUTAMYL-TRNA GLN AMIDOTRANSFERASE SUBUNIT B MITOCHONDRIAL AND PROKARYOTIC PET112-RELATED"/>
    <property type="match status" value="1"/>
</dbReference>
<dbReference type="PANTHER" id="PTHR11659:SF0">
    <property type="entry name" value="GLUTAMYL-TRNA(GLN) AMIDOTRANSFERASE SUBUNIT B, MITOCHONDRIAL"/>
    <property type="match status" value="1"/>
</dbReference>
<dbReference type="Pfam" id="PF02934">
    <property type="entry name" value="GatB_N"/>
    <property type="match status" value="1"/>
</dbReference>
<dbReference type="Pfam" id="PF02637">
    <property type="entry name" value="GatB_Yqey"/>
    <property type="match status" value="1"/>
</dbReference>
<dbReference type="SMART" id="SM00845">
    <property type="entry name" value="GatB_Yqey"/>
    <property type="match status" value="1"/>
</dbReference>
<dbReference type="SUPFAM" id="SSF89095">
    <property type="entry name" value="GatB/YqeY motif"/>
    <property type="match status" value="1"/>
</dbReference>
<dbReference type="SUPFAM" id="SSF55931">
    <property type="entry name" value="Glutamine synthetase/guanido kinase"/>
    <property type="match status" value="1"/>
</dbReference>
<dbReference type="PROSITE" id="PS01234">
    <property type="entry name" value="GATB"/>
    <property type="match status" value="1"/>
</dbReference>
<evidence type="ECO:0000255" key="1">
    <source>
        <dbReference type="HAMAP-Rule" id="MF_00121"/>
    </source>
</evidence>
<proteinExistence type="inferred from homology"/>
<reference key="1">
    <citation type="journal article" date="2006" name="Appl. Environ. Microbiol.">
        <title>Genome sequence of the chemolithoautotrophic nitrite-oxidizing bacterium Nitrobacter winogradskyi Nb-255.</title>
        <authorList>
            <person name="Starkenburg S.R."/>
            <person name="Chain P.S.G."/>
            <person name="Sayavedra-Soto L.A."/>
            <person name="Hauser L."/>
            <person name="Land M.L."/>
            <person name="Larimer F.W."/>
            <person name="Malfatti S.A."/>
            <person name="Klotz M.G."/>
            <person name="Bottomley P.J."/>
            <person name="Arp D.J."/>
            <person name="Hickey W.J."/>
        </authorList>
    </citation>
    <scope>NUCLEOTIDE SEQUENCE [LARGE SCALE GENOMIC DNA]</scope>
    <source>
        <strain>ATCC 25391 / DSM 10237 / CIP 104748 / NCIMB 11846 / Nb-255</strain>
    </source>
</reference>
<protein>
    <recommendedName>
        <fullName evidence="1">Aspartyl/glutamyl-tRNA(Asn/Gln) amidotransferase subunit B</fullName>
        <shortName evidence="1">Asp/Glu-ADT subunit B</shortName>
        <ecNumber evidence="1">6.3.5.-</ecNumber>
    </recommendedName>
</protein>
<sequence length="494" mass="53770">MNAPVKPSHLIKGATGEWEMVIGIEVHAQVTSNAKLFSGASTAFGGDPNSHVSLVDAAMPGMLPVINEECVRQAVRTGLGLNARINLRSVFDRKNYFYPDLPQGYQISQYKSPIVGEGEVVVDLADGTSFVVGIERLHLEQDAGKSLHDQHADMSAIDLNRSGVALMEIVSRPDMRSSEQARAYVTKLRTILRYLGTCDGDMEKGNLRADVNVSVRRPGEPFGTRCEIKNVNSIRFIGQAIEYEARRQIGILEDGGGIDQETRLFDPDKGETRAMRSKEEAHDYRYFPDPDLLPLEFSQGLVDALKADLPELPDQKKARFVTDLGLTSYDAAVLVSEHESANFYESVLADLADARRDGKAAANWVINELFGRLNKQGLSIEASPVSASQLAAIIDLIGEGTISGKIAKDLFEIVWSEGGDPRALVEARGMKQVTDVGAIEKVVDDIVAANPDKVAQVRAKPQMIGWFVGQVMKASGGKVNPQAVNDLLKAKLGL</sequence>
<keyword id="KW-0067">ATP-binding</keyword>
<keyword id="KW-0436">Ligase</keyword>
<keyword id="KW-0547">Nucleotide-binding</keyword>
<keyword id="KW-0648">Protein biosynthesis</keyword>
<keyword id="KW-1185">Reference proteome</keyword>
<comment type="function">
    <text evidence="1">Allows the formation of correctly charged Asn-tRNA(Asn) or Gln-tRNA(Gln) through the transamidation of misacylated Asp-tRNA(Asn) or Glu-tRNA(Gln) in organisms which lack either or both of asparaginyl-tRNA or glutaminyl-tRNA synthetases. The reaction takes place in the presence of glutamine and ATP through an activated phospho-Asp-tRNA(Asn) or phospho-Glu-tRNA(Gln).</text>
</comment>
<comment type="catalytic activity">
    <reaction evidence="1">
        <text>L-glutamyl-tRNA(Gln) + L-glutamine + ATP + H2O = L-glutaminyl-tRNA(Gln) + L-glutamate + ADP + phosphate + H(+)</text>
        <dbReference type="Rhea" id="RHEA:17521"/>
        <dbReference type="Rhea" id="RHEA-COMP:9681"/>
        <dbReference type="Rhea" id="RHEA-COMP:9684"/>
        <dbReference type="ChEBI" id="CHEBI:15377"/>
        <dbReference type="ChEBI" id="CHEBI:15378"/>
        <dbReference type="ChEBI" id="CHEBI:29985"/>
        <dbReference type="ChEBI" id="CHEBI:30616"/>
        <dbReference type="ChEBI" id="CHEBI:43474"/>
        <dbReference type="ChEBI" id="CHEBI:58359"/>
        <dbReference type="ChEBI" id="CHEBI:78520"/>
        <dbReference type="ChEBI" id="CHEBI:78521"/>
        <dbReference type="ChEBI" id="CHEBI:456216"/>
    </reaction>
</comment>
<comment type="catalytic activity">
    <reaction evidence="1">
        <text>L-aspartyl-tRNA(Asn) + L-glutamine + ATP + H2O = L-asparaginyl-tRNA(Asn) + L-glutamate + ADP + phosphate + 2 H(+)</text>
        <dbReference type="Rhea" id="RHEA:14513"/>
        <dbReference type="Rhea" id="RHEA-COMP:9674"/>
        <dbReference type="Rhea" id="RHEA-COMP:9677"/>
        <dbReference type="ChEBI" id="CHEBI:15377"/>
        <dbReference type="ChEBI" id="CHEBI:15378"/>
        <dbReference type="ChEBI" id="CHEBI:29985"/>
        <dbReference type="ChEBI" id="CHEBI:30616"/>
        <dbReference type="ChEBI" id="CHEBI:43474"/>
        <dbReference type="ChEBI" id="CHEBI:58359"/>
        <dbReference type="ChEBI" id="CHEBI:78515"/>
        <dbReference type="ChEBI" id="CHEBI:78516"/>
        <dbReference type="ChEBI" id="CHEBI:456216"/>
    </reaction>
</comment>
<comment type="subunit">
    <text evidence="1">Heterotrimer of A, B and C subunits.</text>
</comment>
<comment type="similarity">
    <text evidence="1">Belongs to the GatB/GatE family. GatB subfamily.</text>
</comment>